<sequence>MNSEEQYYAATQLYKDPCAFQRGPVPEFSANPPACLYMGRQPPPPPPPQFTSSLGSLEQGSPPDISPYEVPPLASDDPAGAHLHHHLPAQLGLAHPPPGPFPNGTEPGGLEEPNRVQLPFPWMKSTKAHAWKGQWAGGAYTAEPEENKRTRTAYTRAQLLELEKEFLFNKYISRPRRVELAVMLNLTERHIKIWFQNRRMKWKKEEDKKRSSGTPSGGGGGEEPEQDCAVTSGEELLAVPPLPPPGGAVPPGVPAAVREGLLPSGLSVSPQPSSIAPLRPQEPR</sequence>
<proteinExistence type="evidence at protein level"/>
<keyword id="KW-0010">Activator</keyword>
<keyword id="KW-0963">Cytoplasm</keyword>
<keyword id="KW-0217">Developmental protein</keyword>
<keyword id="KW-0219">Diabetes mellitus</keyword>
<keyword id="KW-0238">DNA-binding</keyword>
<keyword id="KW-0371">Homeobox</keyword>
<keyword id="KW-0539">Nucleus</keyword>
<keyword id="KW-0597">Phosphoprotein</keyword>
<keyword id="KW-1185">Reference proteome</keyword>
<keyword id="KW-0804">Transcription</keyword>
<keyword id="KW-0805">Transcription regulation</keyword>
<organism>
    <name type="scientific">Mus musculus</name>
    <name type="common">Mouse</name>
    <dbReference type="NCBI Taxonomy" id="10090"/>
    <lineage>
        <taxon>Eukaryota</taxon>
        <taxon>Metazoa</taxon>
        <taxon>Chordata</taxon>
        <taxon>Craniata</taxon>
        <taxon>Vertebrata</taxon>
        <taxon>Euteleostomi</taxon>
        <taxon>Mammalia</taxon>
        <taxon>Eutheria</taxon>
        <taxon>Euarchontoglires</taxon>
        <taxon>Glires</taxon>
        <taxon>Rodentia</taxon>
        <taxon>Myomorpha</taxon>
        <taxon>Muroidea</taxon>
        <taxon>Muridae</taxon>
        <taxon>Murinae</taxon>
        <taxon>Mus</taxon>
        <taxon>Mus</taxon>
    </lineage>
</organism>
<reference key="1">
    <citation type="journal article" date="1993" name="EMBO J.">
        <title>IPF1, a homeodomain-containing transactivator of the insulin gene.</title>
        <authorList>
            <person name="Ohlsson H."/>
            <person name="Karlsson K."/>
            <person name="Edlund T."/>
        </authorList>
    </citation>
    <scope>NUCLEOTIDE SEQUENCE [MRNA]</scope>
</reference>
<reference key="2">
    <citation type="journal article" date="2005" name="Science">
        <title>The transcriptional landscape of the mammalian genome.</title>
        <authorList>
            <person name="Carninci P."/>
            <person name="Kasukawa T."/>
            <person name="Katayama S."/>
            <person name="Gough J."/>
            <person name="Frith M.C."/>
            <person name="Maeda N."/>
            <person name="Oyama R."/>
            <person name="Ravasi T."/>
            <person name="Lenhard B."/>
            <person name="Wells C."/>
            <person name="Kodzius R."/>
            <person name="Shimokawa K."/>
            <person name="Bajic V.B."/>
            <person name="Brenner S.E."/>
            <person name="Batalov S."/>
            <person name="Forrest A.R."/>
            <person name="Zavolan M."/>
            <person name="Davis M.J."/>
            <person name="Wilming L.G."/>
            <person name="Aidinis V."/>
            <person name="Allen J.E."/>
            <person name="Ambesi-Impiombato A."/>
            <person name="Apweiler R."/>
            <person name="Aturaliya R.N."/>
            <person name="Bailey T.L."/>
            <person name="Bansal M."/>
            <person name="Baxter L."/>
            <person name="Beisel K.W."/>
            <person name="Bersano T."/>
            <person name="Bono H."/>
            <person name="Chalk A.M."/>
            <person name="Chiu K.P."/>
            <person name="Choudhary V."/>
            <person name="Christoffels A."/>
            <person name="Clutterbuck D.R."/>
            <person name="Crowe M.L."/>
            <person name="Dalla E."/>
            <person name="Dalrymple B.P."/>
            <person name="de Bono B."/>
            <person name="Della Gatta G."/>
            <person name="di Bernardo D."/>
            <person name="Down T."/>
            <person name="Engstrom P."/>
            <person name="Fagiolini M."/>
            <person name="Faulkner G."/>
            <person name="Fletcher C.F."/>
            <person name="Fukushima T."/>
            <person name="Furuno M."/>
            <person name="Futaki S."/>
            <person name="Gariboldi M."/>
            <person name="Georgii-Hemming P."/>
            <person name="Gingeras T.R."/>
            <person name="Gojobori T."/>
            <person name="Green R.E."/>
            <person name="Gustincich S."/>
            <person name="Harbers M."/>
            <person name="Hayashi Y."/>
            <person name="Hensch T.K."/>
            <person name="Hirokawa N."/>
            <person name="Hill D."/>
            <person name="Huminiecki L."/>
            <person name="Iacono M."/>
            <person name="Ikeo K."/>
            <person name="Iwama A."/>
            <person name="Ishikawa T."/>
            <person name="Jakt M."/>
            <person name="Kanapin A."/>
            <person name="Katoh M."/>
            <person name="Kawasawa Y."/>
            <person name="Kelso J."/>
            <person name="Kitamura H."/>
            <person name="Kitano H."/>
            <person name="Kollias G."/>
            <person name="Krishnan S.P."/>
            <person name="Kruger A."/>
            <person name="Kummerfeld S.K."/>
            <person name="Kurochkin I.V."/>
            <person name="Lareau L.F."/>
            <person name="Lazarevic D."/>
            <person name="Lipovich L."/>
            <person name="Liu J."/>
            <person name="Liuni S."/>
            <person name="McWilliam S."/>
            <person name="Madan Babu M."/>
            <person name="Madera M."/>
            <person name="Marchionni L."/>
            <person name="Matsuda H."/>
            <person name="Matsuzawa S."/>
            <person name="Miki H."/>
            <person name="Mignone F."/>
            <person name="Miyake S."/>
            <person name="Morris K."/>
            <person name="Mottagui-Tabar S."/>
            <person name="Mulder N."/>
            <person name="Nakano N."/>
            <person name="Nakauchi H."/>
            <person name="Ng P."/>
            <person name="Nilsson R."/>
            <person name="Nishiguchi S."/>
            <person name="Nishikawa S."/>
            <person name="Nori F."/>
            <person name="Ohara O."/>
            <person name="Okazaki Y."/>
            <person name="Orlando V."/>
            <person name="Pang K.C."/>
            <person name="Pavan W.J."/>
            <person name="Pavesi G."/>
            <person name="Pesole G."/>
            <person name="Petrovsky N."/>
            <person name="Piazza S."/>
            <person name="Reed J."/>
            <person name="Reid J.F."/>
            <person name="Ring B.Z."/>
            <person name="Ringwald M."/>
            <person name="Rost B."/>
            <person name="Ruan Y."/>
            <person name="Salzberg S.L."/>
            <person name="Sandelin A."/>
            <person name="Schneider C."/>
            <person name="Schoenbach C."/>
            <person name="Sekiguchi K."/>
            <person name="Semple C.A."/>
            <person name="Seno S."/>
            <person name="Sessa L."/>
            <person name="Sheng Y."/>
            <person name="Shibata Y."/>
            <person name="Shimada H."/>
            <person name="Shimada K."/>
            <person name="Silva D."/>
            <person name="Sinclair B."/>
            <person name="Sperling S."/>
            <person name="Stupka E."/>
            <person name="Sugiura K."/>
            <person name="Sultana R."/>
            <person name="Takenaka Y."/>
            <person name="Taki K."/>
            <person name="Tammoja K."/>
            <person name="Tan S.L."/>
            <person name="Tang S."/>
            <person name="Taylor M.S."/>
            <person name="Tegner J."/>
            <person name="Teichmann S.A."/>
            <person name="Ueda H.R."/>
            <person name="van Nimwegen E."/>
            <person name="Verardo R."/>
            <person name="Wei C.L."/>
            <person name="Yagi K."/>
            <person name="Yamanishi H."/>
            <person name="Zabarovsky E."/>
            <person name="Zhu S."/>
            <person name="Zimmer A."/>
            <person name="Hide W."/>
            <person name="Bult C."/>
            <person name="Grimmond S.M."/>
            <person name="Teasdale R.D."/>
            <person name="Liu E.T."/>
            <person name="Brusic V."/>
            <person name="Quackenbush J."/>
            <person name="Wahlestedt C."/>
            <person name="Mattick J.S."/>
            <person name="Hume D.A."/>
            <person name="Kai C."/>
            <person name="Sasaki D."/>
            <person name="Tomaru Y."/>
            <person name="Fukuda S."/>
            <person name="Kanamori-Katayama M."/>
            <person name="Suzuki M."/>
            <person name="Aoki J."/>
            <person name="Arakawa T."/>
            <person name="Iida J."/>
            <person name="Imamura K."/>
            <person name="Itoh M."/>
            <person name="Kato T."/>
            <person name="Kawaji H."/>
            <person name="Kawagashira N."/>
            <person name="Kawashima T."/>
            <person name="Kojima M."/>
            <person name="Kondo S."/>
            <person name="Konno H."/>
            <person name="Nakano K."/>
            <person name="Ninomiya N."/>
            <person name="Nishio T."/>
            <person name="Okada M."/>
            <person name="Plessy C."/>
            <person name="Shibata K."/>
            <person name="Shiraki T."/>
            <person name="Suzuki S."/>
            <person name="Tagami M."/>
            <person name="Waki K."/>
            <person name="Watahiki A."/>
            <person name="Okamura-Oho Y."/>
            <person name="Suzuki H."/>
            <person name="Kawai J."/>
            <person name="Hayashizaki Y."/>
        </authorList>
    </citation>
    <scope>NUCLEOTIDE SEQUENCE [LARGE SCALE MRNA]</scope>
    <source>
        <strain>C57BL/6J</strain>
        <tissue>Cecum</tissue>
    </source>
</reference>
<reference key="3">
    <citation type="journal article" date="2004" name="Genome Res.">
        <title>The status, quality, and expansion of the NIH full-length cDNA project: the Mammalian Gene Collection (MGC).</title>
        <authorList>
            <consortium name="The MGC Project Team"/>
        </authorList>
    </citation>
    <scope>NUCLEOTIDE SEQUENCE [LARGE SCALE MRNA]</scope>
</reference>
<reference key="4">
    <citation type="journal article" date="1998" name="Mol. Cell. Biol.">
        <title>An endocrine-exocrine switch in the activity of the pancreatic homeodomain protein PDX1 through formation of a trimeric complex with PBX1b and MRG1 (MEIS2).</title>
        <authorList>
            <person name="Swift G.H."/>
            <person name="Liu Y."/>
            <person name="Rose S.D."/>
            <person name="Bischof L.J."/>
            <person name="Steelman S."/>
            <person name="Buchberg A.M."/>
            <person name="Wright C.V."/>
            <person name="MacDonald R.J."/>
        </authorList>
    </citation>
    <scope>FUNCTION</scope>
    <scope>IDENTIFICATION IN A COMPLEX WITH MEIS2 AND PBX1</scope>
</reference>
<reference key="5">
    <citation type="journal article" date="2001" name="J. Biol. Chem.">
        <title>DNA binding and transcriptional activation by a PDX1.PBX1b.MEIS2b trimer and cooperation with a pancreas-specific basic helix-loop-helix complex.</title>
        <authorList>
            <person name="Liu Y."/>
            <person name="MacDonald R.J."/>
            <person name="Swift G.H."/>
        </authorList>
    </citation>
    <scope>FUNCTION</scope>
    <scope>IDENTIFICATION IN A COMPLEX WITH MEIS2 AND PBX1</scope>
</reference>
<reference key="6">
    <citation type="journal article" date="2004" name="Mol. Cell. Biol.">
        <title>Identification of PCIF1, a POZ domain protein that inhibits PDX-1 (MODY4) transcriptional activity.</title>
        <authorList>
            <person name="Liu A."/>
            <person name="Desai B.M."/>
            <person name="Stoffers D.A."/>
        </authorList>
    </citation>
    <scope>INTERACTION WITH SPOP</scope>
    <source>
        <strain>BALB/cJ</strain>
        <tissue>Pancreas</tissue>
    </source>
</reference>
<reference key="7">
    <citation type="journal article" date="2002" name="Nat. Genet.">
        <title>Regulation of insulin action and pancreatic beta-cell function by mutated alleles of the gene encoding forkhead transcription factor Foxo1.</title>
        <authorList>
            <person name="Nakae J."/>
            <person name="Biggs W.H. III"/>
            <person name="Kitamura T."/>
            <person name="Cavenee W.K."/>
            <person name="Wright C.V."/>
            <person name="Arden K.C."/>
            <person name="Accili D."/>
        </authorList>
    </citation>
    <scope>FUNCTION</scope>
    <scope>INDUCTION</scope>
</reference>
<reference key="8">
    <citation type="journal article" date="2006" name="Biochem. Soc. Trans.">
        <title>Regulation by Per-Arnt-Sim (PAS) kinase of pancreatic duodenal homeobox-1 nuclear import in pancreatic beta-cells.</title>
        <authorList>
            <person name="An R."/>
            <person name="da Silva Xavier G."/>
            <person name="Hao H.X."/>
            <person name="Semplici F."/>
            <person name="Rutter J."/>
            <person name="Rutter G.A."/>
        </authorList>
    </citation>
    <scope>SUBCELLULAR LOCATION</scope>
    <scope>PHOSPHORYLATION AT THR-152</scope>
    <scope>MUTAGENESIS OF THR-152</scope>
</reference>
<reference key="9">
    <citation type="journal article" date="2010" name="Biochem. Biophys. Res. Commun.">
        <title>Pancreatic and duodenal homeobox 1 (PDX1) phosphorylation at serine-269 is HIPK2-dependent and affects PDX1 subnuclear localization.</title>
        <authorList>
            <person name="An R."/>
            <person name="da Silva Xavier G."/>
            <person name="Semplici F."/>
            <person name="Vakhshouri S."/>
            <person name="Hao H.X."/>
            <person name="Rutter J."/>
            <person name="Pagano M.A."/>
            <person name="Meggio F."/>
            <person name="Pinna L.A."/>
            <person name="Rutter G.A."/>
        </authorList>
    </citation>
    <scope>PHOSPHORYLATION AT SER-269 BY HIPK2</scope>
    <scope>MUTAGENESIS OF SER-269</scope>
</reference>
<dbReference type="EMBL" id="X74342">
    <property type="protein sequence ID" value="CAA52389.1"/>
    <property type="molecule type" value="mRNA"/>
</dbReference>
<dbReference type="EMBL" id="AK020261">
    <property type="protein sequence ID" value="BAB32045.1"/>
    <property type="molecule type" value="mRNA"/>
</dbReference>
<dbReference type="EMBL" id="BC103572">
    <property type="protein sequence ID" value="AAI03573.1"/>
    <property type="molecule type" value="mRNA"/>
</dbReference>
<dbReference type="EMBL" id="BC103581">
    <property type="protein sequence ID" value="AAI03582.1"/>
    <property type="molecule type" value="mRNA"/>
</dbReference>
<dbReference type="EMBL" id="BC103582">
    <property type="protein sequence ID" value="AAI03583.1"/>
    <property type="molecule type" value="mRNA"/>
</dbReference>
<dbReference type="EMBL" id="BC105642">
    <property type="protein sequence ID" value="AAI05643.1"/>
    <property type="molecule type" value="mRNA"/>
</dbReference>
<dbReference type="CCDS" id="CCDS39398.1"/>
<dbReference type="PIR" id="S39581">
    <property type="entry name" value="S39581"/>
</dbReference>
<dbReference type="RefSeq" id="NP_032840.1">
    <property type="nucleotide sequence ID" value="NM_008814.4"/>
</dbReference>
<dbReference type="SMR" id="P52946"/>
<dbReference type="BioGRID" id="202101">
    <property type="interactions" value="6"/>
</dbReference>
<dbReference type="CORUM" id="P52946"/>
<dbReference type="FunCoup" id="P52946">
    <property type="interactions" value="1592"/>
</dbReference>
<dbReference type="IntAct" id="P52946">
    <property type="interactions" value="2"/>
</dbReference>
<dbReference type="MINT" id="P52946"/>
<dbReference type="STRING" id="10090.ENSMUSP00000082729"/>
<dbReference type="GlyGen" id="P52946">
    <property type="glycosylation" value="2 sites, 1 O-linked glycan (1 site)"/>
</dbReference>
<dbReference type="iPTMnet" id="P52946"/>
<dbReference type="PhosphoSitePlus" id="P52946"/>
<dbReference type="PaxDb" id="10090-ENSMUSP00000082729"/>
<dbReference type="PeptideAtlas" id="P52946"/>
<dbReference type="ProteomicsDB" id="287995"/>
<dbReference type="Antibodypedia" id="22687">
    <property type="antibodies" value="904 antibodies from 40 providers"/>
</dbReference>
<dbReference type="DNASU" id="18609"/>
<dbReference type="Ensembl" id="ENSMUST00000085591.7">
    <property type="protein sequence ID" value="ENSMUSP00000082729.6"/>
    <property type="gene ID" value="ENSMUSG00000029644.8"/>
</dbReference>
<dbReference type="GeneID" id="18609"/>
<dbReference type="KEGG" id="mmu:18609"/>
<dbReference type="UCSC" id="uc009any.2">
    <property type="organism name" value="mouse"/>
</dbReference>
<dbReference type="AGR" id="MGI:102851"/>
<dbReference type="CTD" id="3651"/>
<dbReference type="MGI" id="MGI:102851">
    <property type="gene designation" value="Pdx1"/>
</dbReference>
<dbReference type="VEuPathDB" id="HostDB:ENSMUSG00000029644"/>
<dbReference type="eggNOG" id="KOG0489">
    <property type="taxonomic scope" value="Eukaryota"/>
</dbReference>
<dbReference type="GeneTree" id="ENSGT00940000162542"/>
<dbReference type="HOGENOM" id="CLU_087401_0_0_1"/>
<dbReference type="InParanoid" id="P52946"/>
<dbReference type="OMA" id="SHSHTWK"/>
<dbReference type="OrthoDB" id="6159439at2759"/>
<dbReference type="PhylomeDB" id="P52946"/>
<dbReference type="TreeFam" id="TF326223"/>
<dbReference type="BioGRID-ORCS" id="18609">
    <property type="hits" value="4 hits in 79 CRISPR screens"/>
</dbReference>
<dbReference type="PRO" id="PR:P52946"/>
<dbReference type="Proteomes" id="UP000000589">
    <property type="component" value="Chromosome 5"/>
</dbReference>
<dbReference type="RNAct" id="P52946">
    <property type="molecule type" value="protein"/>
</dbReference>
<dbReference type="Bgee" id="ENSMUSG00000029644">
    <property type="expression patterns" value="Expressed in pancreas primordium and 49 other cell types or tissues"/>
</dbReference>
<dbReference type="GO" id="GO:0005829">
    <property type="term" value="C:cytosol"/>
    <property type="evidence" value="ECO:0000304"/>
    <property type="project" value="Reactome"/>
</dbReference>
<dbReference type="GO" id="GO:0016607">
    <property type="term" value="C:nuclear speck"/>
    <property type="evidence" value="ECO:0000314"/>
    <property type="project" value="MGI"/>
</dbReference>
<dbReference type="GO" id="GO:0005654">
    <property type="term" value="C:nucleoplasm"/>
    <property type="evidence" value="ECO:0000304"/>
    <property type="project" value="Reactome"/>
</dbReference>
<dbReference type="GO" id="GO:0005634">
    <property type="term" value="C:nucleus"/>
    <property type="evidence" value="ECO:0000314"/>
    <property type="project" value="MGI"/>
</dbReference>
<dbReference type="GO" id="GO:0003682">
    <property type="term" value="F:chromatin binding"/>
    <property type="evidence" value="ECO:0000314"/>
    <property type="project" value="MGI"/>
</dbReference>
<dbReference type="GO" id="GO:0001228">
    <property type="term" value="F:DNA-binding transcription activator activity, RNA polymerase II-specific"/>
    <property type="evidence" value="ECO:0000305"/>
    <property type="project" value="NTNU_SB"/>
</dbReference>
<dbReference type="GO" id="GO:0003700">
    <property type="term" value="F:DNA-binding transcription factor activity"/>
    <property type="evidence" value="ECO:0000314"/>
    <property type="project" value="MGI"/>
</dbReference>
<dbReference type="GO" id="GO:1990841">
    <property type="term" value="F:promoter-specific chromatin binding"/>
    <property type="evidence" value="ECO:0007669"/>
    <property type="project" value="Ensembl"/>
</dbReference>
<dbReference type="GO" id="GO:0044877">
    <property type="term" value="F:protein-containing complex binding"/>
    <property type="evidence" value="ECO:0007669"/>
    <property type="project" value="Ensembl"/>
</dbReference>
<dbReference type="GO" id="GO:0000978">
    <property type="term" value="F:RNA polymerase II cis-regulatory region sequence-specific DNA binding"/>
    <property type="evidence" value="ECO:0000314"/>
    <property type="project" value="NTNU_SB"/>
</dbReference>
<dbReference type="GO" id="GO:0043565">
    <property type="term" value="F:sequence-specific DNA binding"/>
    <property type="evidence" value="ECO:0000314"/>
    <property type="project" value="MGI"/>
</dbReference>
<dbReference type="GO" id="GO:0031100">
    <property type="term" value="P:animal organ regeneration"/>
    <property type="evidence" value="ECO:0007669"/>
    <property type="project" value="Ensembl"/>
</dbReference>
<dbReference type="GO" id="GO:0008283">
    <property type="term" value="P:cell population proliferation"/>
    <property type="evidence" value="ECO:0000315"/>
    <property type="project" value="MGI"/>
</dbReference>
<dbReference type="GO" id="GO:0048565">
    <property type="term" value="P:digestive tract development"/>
    <property type="evidence" value="ECO:0000315"/>
    <property type="project" value="MGI"/>
</dbReference>
<dbReference type="GO" id="GO:0031018">
    <property type="term" value="P:endocrine pancreas development"/>
    <property type="evidence" value="ECO:0000315"/>
    <property type="project" value="MGI"/>
</dbReference>
<dbReference type="GO" id="GO:0035883">
    <property type="term" value="P:enteroendocrine cell differentiation"/>
    <property type="evidence" value="ECO:0000315"/>
    <property type="project" value="MGI"/>
</dbReference>
<dbReference type="GO" id="GO:0050673">
    <property type="term" value="P:epithelial cell proliferation"/>
    <property type="evidence" value="ECO:0000315"/>
    <property type="project" value="MGI"/>
</dbReference>
<dbReference type="GO" id="GO:0031017">
    <property type="term" value="P:exocrine pancreas development"/>
    <property type="evidence" value="ECO:0000315"/>
    <property type="project" value="MGI"/>
</dbReference>
<dbReference type="GO" id="GO:0042593">
    <property type="term" value="P:glucose homeostasis"/>
    <property type="evidence" value="ECO:0000315"/>
    <property type="project" value="MGI"/>
</dbReference>
<dbReference type="GO" id="GO:0010255">
    <property type="term" value="P:glucose mediated signaling pathway"/>
    <property type="evidence" value="ECO:0007669"/>
    <property type="project" value="Ensembl"/>
</dbReference>
<dbReference type="GO" id="GO:0006006">
    <property type="term" value="P:glucose metabolic process"/>
    <property type="evidence" value="ECO:0000314"/>
    <property type="project" value="MGI"/>
</dbReference>
<dbReference type="GO" id="GO:0030073">
    <property type="term" value="P:insulin secretion"/>
    <property type="evidence" value="ECO:0007669"/>
    <property type="project" value="Ensembl"/>
</dbReference>
<dbReference type="GO" id="GO:0070059">
    <property type="term" value="P:intrinsic apoptotic signaling pathway in response to endoplasmic reticulum stress"/>
    <property type="evidence" value="ECO:0000315"/>
    <property type="project" value="MGI"/>
</dbReference>
<dbReference type="GO" id="GO:0001889">
    <property type="term" value="P:liver development"/>
    <property type="evidence" value="ECO:0000315"/>
    <property type="project" value="MGI"/>
</dbReference>
<dbReference type="GO" id="GO:0016331">
    <property type="term" value="P:morphogenesis of embryonic epithelium"/>
    <property type="evidence" value="ECO:0000315"/>
    <property type="project" value="MGI"/>
</dbReference>
<dbReference type="GO" id="GO:0008285">
    <property type="term" value="P:negative regulation of cell population proliferation"/>
    <property type="evidence" value="ECO:0000315"/>
    <property type="project" value="MGI"/>
</dbReference>
<dbReference type="GO" id="GO:1902236">
    <property type="term" value="P:negative regulation of endoplasmic reticulum stress-induced intrinsic apoptotic signaling pathway"/>
    <property type="evidence" value="ECO:0000315"/>
    <property type="project" value="MGI"/>
</dbReference>
<dbReference type="GO" id="GO:0050680">
    <property type="term" value="P:negative regulation of epithelial cell proliferation"/>
    <property type="evidence" value="ECO:0000315"/>
    <property type="project" value="MGI"/>
</dbReference>
<dbReference type="GO" id="GO:0000122">
    <property type="term" value="P:negative regulation of transcription by RNA polymerase II"/>
    <property type="evidence" value="ECO:0000314"/>
    <property type="project" value="MGI"/>
</dbReference>
<dbReference type="GO" id="GO:2000675">
    <property type="term" value="P:negative regulation of type B pancreatic cell apoptotic process"/>
    <property type="evidence" value="ECO:0000315"/>
    <property type="project" value="MGI"/>
</dbReference>
<dbReference type="GO" id="GO:0031016">
    <property type="term" value="P:pancreas development"/>
    <property type="evidence" value="ECO:0000315"/>
    <property type="project" value="MGI"/>
</dbReference>
<dbReference type="GO" id="GO:0045893">
    <property type="term" value="P:positive regulation of DNA-templated transcription"/>
    <property type="evidence" value="ECO:0000314"/>
    <property type="project" value="MGI"/>
</dbReference>
<dbReference type="GO" id="GO:0032024">
    <property type="term" value="P:positive regulation of insulin secretion"/>
    <property type="evidence" value="ECO:0000314"/>
    <property type="project" value="UniProtKB"/>
</dbReference>
<dbReference type="GO" id="GO:0035774">
    <property type="term" value="P:positive regulation of insulin secretion involved in cellular response to glucose stimulus"/>
    <property type="evidence" value="ECO:0000315"/>
    <property type="project" value="MGI"/>
</dbReference>
<dbReference type="GO" id="GO:0045944">
    <property type="term" value="P:positive regulation of transcription by RNA polymerase II"/>
    <property type="evidence" value="ECO:0000314"/>
    <property type="project" value="NTNU_SB"/>
</dbReference>
<dbReference type="GO" id="GO:1904692">
    <property type="term" value="P:positive regulation of type B pancreatic cell proliferation"/>
    <property type="evidence" value="ECO:0000315"/>
    <property type="project" value="MGI"/>
</dbReference>
<dbReference type="GO" id="GO:0042127">
    <property type="term" value="P:regulation of cell population proliferation"/>
    <property type="evidence" value="ECO:0000314"/>
    <property type="project" value="MGI"/>
</dbReference>
<dbReference type="GO" id="GO:0006357">
    <property type="term" value="P:regulation of transcription by RNA polymerase II"/>
    <property type="evidence" value="ECO:0000314"/>
    <property type="project" value="MGI"/>
</dbReference>
<dbReference type="GO" id="GO:0043279">
    <property type="term" value="P:response to alkaloid"/>
    <property type="evidence" value="ECO:0007669"/>
    <property type="project" value="Ensembl"/>
</dbReference>
<dbReference type="GO" id="GO:0010157">
    <property type="term" value="P:response to chlorate"/>
    <property type="evidence" value="ECO:0007669"/>
    <property type="project" value="Ensembl"/>
</dbReference>
<dbReference type="GO" id="GO:0034097">
    <property type="term" value="P:response to cytokine"/>
    <property type="evidence" value="ECO:0007669"/>
    <property type="project" value="Ensembl"/>
</dbReference>
<dbReference type="GO" id="GO:0070542">
    <property type="term" value="P:response to fatty acid"/>
    <property type="evidence" value="ECO:0007669"/>
    <property type="project" value="Ensembl"/>
</dbReference>
<dbReference type="GO" id="GO:0051384">
    <property type="term" value="P:response to glucocorticoid"/>
    <property type="evidence" value="ECO:0007669"/>
    <property type="project" value="Ensembl"/>
</dbReference>
<dbReference type="GO" id="GO:0010040">
    <property type="term" value="P:response to iron(II) ion"/>
    <property type="evidence" value="ECO:0007669"/>
    <property type="project" value="Ensembl"/>
</dbReference>
<dbReference type="GO" id="GO:0043201">
    <property type="term" value="P:response to L-leucine"/>
    <property type="evidence" value="ECO:0007669"/>
    <property type="project" value="Ensembl"/>
</dbReference>
<dbReference type="GO" id="GO:0035094">
    <property type="term" value="P:response to nicotine"/>
    <property type="evidence" value="ECO:0007669"/>
    <property type="project" value="Ensembl"/>
</dbReference>
<dbReference type="GO" id="GO:0033273">
    <property type="term" value="P:response to vitamin"/>
    <property type="evidence" value="ECO:0007669"/>
    <property type="project" value="Ensembl"/>
</dbReference>
<dbReference type="GO" id="GO:0009410">
    <property type="term" value="P:response to xenobiotic stimulus"/>
    <property type="evidence" value="ECO:0007669"/>
    <property type="project" value="Ensembl"/>
</dbReference>
<dbReference type="GO" id="GO:0007224">
    <property type="term" value="P:smoothened signaling pathway"/>
    <property type="evidence" value="ECO:0007669"/>
    <property type="project" value="Ensembl"/>
</dbReference>
<dbReference type="GO" id="GO:0048863">
    <property type="term" value="P:stem cell differentiation"/>
    <property type="evidence" value="ECO:0007669"/>
    <property type="project" value="Ensembl"/>
</dbReference>
<dbReference type="GO" id="GO:0006366">
    <property type="term" value="P:transcription by RNA polymerase II"/>
    <property type="evidence" value="ECO:0007669"/>
    <property type="project" value="Ensembl"/>
</dbReference>
<dbReference type="GO" id="GO:0060290">
    <property type="term" value="P:transdifferentiation"/>
    <property type="evidence" value="ECO:0007669"/>
    <property type="project" value="Ensembl"/>
</dbReference>
<dbReference type="GO" id="GO:0097050">
    <property type="term" value="P:type B pancreatic cell apoptotic process"/>
    <property type="evidence" value="ECO:0000315"/>
    <property type="project" value="MGI"/>
</dbReference>
<dbReference type="GO" id="GO:0003309">
    <property type="term" value="P:type B pancreatic cell differentiation"/>
    <property type="evidence" value="ECO:0000315"/>
    <property type="project" value="MGI"/>
</dbReference>
<dbReference type="GO" id="GO:0044342">
    <property type="term" value="P:type B pancreatic cell proliferation"/>
    <property type="evidence" value="ECO:0000315"/>
    <property type="project" value="MGI"/>
</dbReference>
<dbReference type="CDD" id="cd00086">
    <property type="entry name" value="homeodomain"/>
    <property type="match status" value="1"/>
</dbReference>
<dbReference type="FunFam" id="1.10.10.60:FF:000176">
    <property type="entry name" value="pancreas/duodenum homeobox protein 1"/>
    <property type="match status" value="1"/>
</dbReference>
<dbReference type="Gene3D" id="1.10.10.60">
    <property type="entry name" value="Homeodomain-like"/>
    <property type="match status" value="1"/>
</dbReference>
<dbReference type="InterPro" id="IPR001356">
    <property type="entry name" value="HD"/>
</dbReference>
<dbReference type="InterPro" id="IPR020479">
    <property type="entry name" value="HD_metazoa"/>
</dbReference>
<dbReference type="InterPro" id="IPR017995">
    <property type="entry name" value="Homeobox_antennapedia"/>
</dbReference>
<dbReference type="InterPro" id="IPR017970">
    <property type="entry name" value="Homeobox_CS"/>
</dbReference>
<dbReference type="InterPro" id="IPR009057">
    <property type="entry name" value="Homeodomain-like_sf"/>
</dbReference>
<dbReference type="PANTHER" id="PTHR45664:SF12">
    <property type="entry name" value="PANCREAS_DUODENUM HOMEOBOX PROTEIN 1"/>
    <property type="match status" value="1"/>
</dbReference>
<dbReference type="PANTHER" id="PTHR45664">
    <property type="entry name" value="PROTEIN ZERKNUELLT 1-RELATED"/>
    <property type="match status" value="1"/>
</dbReference>
<dbReference type="Pfam" id="PF00046">
    <property type="entry name" value="Homeodomain"/>
    <property type="match status" value="1"/>
</dbReference>
<dbReference type="PRINTS" id="PR00025">
    <property type="entry name" value="ANTENNAPEDIA"/>
</dbReference>
<dbReference type="PRINTS" id="PR00024">
    <property type="entry name" value="HOMEOBOX"/>
</dbReference>
<dbReference type="SMART" id="SM00389">
    <property type="entry name" value="HOX"/>
    <property type="match status" value="1"/>
</dbReference>
<dbReference type="SUPFAM" id="SSF46689">
    <property type="entry name" value="Homeodomain-like"/>
    <property type="match status" value="1"/>
</dbReference>
<dbReference type="PROSITE" id="PS00027">
    <property type="entry name" value="HOMEOBOX_1"/>
    <property type="match status" value="1"/>
</dbReference>
<dbReference type="PROSITE" id="PS50071">
    <property type="entry name" value="HOMEOBOX_2"/>
    <property type="match status" value="1"/>
</dbReference>
<comment type="function">
    <text evidence="4 5 9">Activates insulin and somatostatin gene transcription. Key regulator of islet peptide hormone expression but also responsible for the development of the pancreas, most probably by determining maturation and differentiation of common pancreatic precursor cells in the developing gut. As part of a PDX1:PBX1b:MEIS2b complex in pancreatic acinar cells is involved in the transcriptional activation of the ELA1 enhancer; the complex binds to the enhancer B element and cooperates with the transcription factor 1 complex (PTF1) bound to the enhancer A element. Binds the DNA sequence 5'-CC[CT]TAATGGG-3'.</text>
</comment>
<comment type="subunit">
    <text evidence="1 4 6 9">Interacts with the basic helix-loop-helix domains of TCF3(E47) and NEUROD1 and with HMG-I(Y). Interacts with the methyltransferase SETD7 (By similarity). Interacts with SPOP. Part of a PDX1:PBX1b:MEIS2b complex.</text>
</comment>
<comment type="interaction">
    <interactant intactId="EBI-7128945">
        <id>P52946</id>
    </interactant>
    <interactant intactId="EBI-971782">
        <id>P13405</id>
        <label>Rb1</label>
    </interactant>
    <organismsDiffer>false</organismsDiffer>
    <experiments>2</experiments>
</comment>
<comment type="interaction">
    <interactant intactId="EBI-7128945">
        <id>P52946</id>
    </interactant>
    <interactant intactId="EBI-7128920">
        <id>Q6ZWS8</id>
        <label>Spop</label>
    </interactant>
    <organismsDiffer>false</organismsDiffer>
    <experiments>5</experiments>
</comment>
<comment type="subcellular location">
    <subcellularLocation>
        <location evidence="2 7">Nucleus</location>
    </subcellularLocation>
    <subcellularLocation>
        <location evidence="7">Cytoplasm</location>
        <location evidence="7">Cytosol</location>
    </subcellularLocation>
</comment>
<comment type="tissue specificity">
    <text>Duodenum and pancreas (Langerhans islet beta cells and small subsets of endocrine non-beta-cells, at low levels in acinar cells).</text>
</comment>
<comment type="developmental stage">
    <text>At 8.5 dpc, detected in the gut epithelium from which the pancreatic buds are formed. Transient expression in pancreatic ducts, endocrine and acinar cells. Down-regulated around 10.5 dpc when expression becomes restricted to differentiated beta-cells.</text>
</comment>
<comment type="induction">
    <text evidence="5">Expression is repressed by FOXO1 in pancreatic beta-cells.</text>
</comment>
<comment type="domain">
    <text evidence="1">The Antp-type hexapeptide mediates heterodimerization with PBX on a regulatory element of the somatostatin promoter.</text>
</comment>
<comment type="domain">
    <text evidence="1">The homeodomain, which contains the nuclear localization signal, not only mediates DNA-binding, but also acts as a protein-protein interaction domain for TCF3(E47), NEUROD1 and HMG-I(Y).</text>
</comment>
<comment type="PTM">
    <text evidence="7 8">Phosphorylated by the SAPK2 pathway at high intracellular glucose concentration. Phosphorylated by HIPK2 on Ser-269 upon glucose accumulation. This phosphorylation mediates subnuclear localization shifting. Phosphorylation by PASK may lead to translocation into the cytosol.</text>
</comment>
<comment type="similarity">
    <text evidence="10">Belongs to the Antp homeobox family. IPF1/XlHbox-8 subfamily.</text>
</comment>
<feature type="chain" id="PRO_0000049149" description="Pancreas/duodenum homeobox protein 1">
    <location>
        <begin position="1"/>
        <end position="284"/>
    </location>
</feature>
<feature type="DNA-binding region" description="Homeobox" evidence="2">
    <location>
        <begin position="147"/>
        <end position="206"/>
    </location>
</feature>
<feature type="region of interest" description="Transactivation domain" evidence="1">
    <location>
        <begin position="13"/>
        <end position="73"/>
    </location>
</feature>
<feature type="region of interest" description="Disordered" evidence="3">
    <location>
        <begin position="30"/>
        <end position="116"/>
    </location>
</feature>
<feature type="region of interest" description="Disordered" evidence="3">
    <location>
        <begin position="202"/>
        <end position="284"/>
    </location>
</feature>
<feature type="short sequence motif" description="Antp-type hexapeptide">
    <location>
        <begin position="119"/>
        <end position="124"/>
    </location>
</feature>
<feature type="short sequence motif" description="Nuclear localization signal">
    <location>
        <begin position="198"/>
        <end position="204"/>
    </location>
</feature>
<feature type="compositionally biased region" description="Polar residues" evidence="3">
    <location>
        <begin position="50"/>
        <end position="59"/>
    </location>
</feature>
<feature type="compositionally biased region" description="Pro residues" evidence="3">
    <location>
        <begin position="240"/>
        <end position="253"/>
    </location>
</feature>
<feature type="modified residue" description="Phosphothreonine; by PASK" evidence="7">
    <location>
        <position position="152"/>
    </location>
</feature>
<feature type="modified residue" description="Phosphoserine; by HIPK2" evidence="8">
    <location>
        <position position="269"/>
    </location>
</feature>
<feature type="mutagenesis site" description="Displays a more cytosolic distribution." evidence="7">
    <original>T</original>
    <variation>D</variation>
    <variation>E</variation>
    <location>
        <position position="152"/>
    </location>
</feature>
<feature type="mutagenesis site" description="Reduced phosphorylation by HIPK2." evidence="8">
    <original>S</original>
    <variation>A</variation>
    <location>
        <position position="269"/>
    </location>
</feature>
<feature type="mutagenesis site" description="Abnormal subnuclear localization upon glucose accumulation." evidence="8">
    <original>S</original>
    <variation>E</variation>
    <location>
        <position position="269"/>
    </location>
</feature>
<name>PDX1_MOUSE</name>
<evidence type="ECO:0000250" key="1"/>
<evidence type="ECO:0000255" key="2">
    <source>
        <dbReference type="PROSITE-ProRule" id="PRU00108"/>
    </source>
</evidence>
<evidence type="ECO:0000256" key="3">
    <source>
        <dbReference type="SAM" id="MobiDB-lite"/>
    </source>
</evidence>
<evidence type="ECO:0000269" key="4">
    <source>
    </source>
</evidence>
<evidence type="ECO:0000269" key="5">
    <source>
    </source>
</evidence>
<evidence type="ECO:0000269" key="6">
    <source>
    </source>
</evidence>
<evidence type="ECO:0000269" key="7">
    <source>
    </source>
</evidence>
<evidence type="ECO:0000269" key="8">
    <source>
    </source>
</evidence>
<evidence type="ECO:0000269" key="9">
    <source>
    </source>
</evidence>
<evidence type="ECO:0000305" key="10"/>
<protein>
    <recommendedName>
        <fullName>Pancreas/duodenum homeobox protein 1</fullName>
    </recommendedName>
    <alternativeName>
        <fullName>Insulin promoter factor 1</fullName>
        <shortName>IPF-1</shortName>
    </alternativeName>
    <alternativeName>
        <fullName>Islet/duodenum homeobox 1</fullName>
        <shortName>IDX-1</shortName>
    </alternativeName>
    <alternativeName>
        <fullName>Somatostatin-transactivating factor 1</fullName>
        <shortName>STF-1</shortName>
    </alternativeName>
</protein>
<gene>
    <name type="primary">Pdx1</name>
    <name type="synonym">Ipf1</name>
</gene>
<accession>P52946</accession>
<accession>Q3ZB03</accession>